<protein>
    <recommendedName>
        <fullName>Uncharacterized protein MT1366</fullName>
    </recommendedName>
</protein>
<evidence type="ECO:0000255" key="1"/>
<evidence type="ECO:0000255" key="2">
    <source>
        <dbReference type="PROSITE-ProRule" id="PRU00691"/>
    </source>
</evidence>
<gene>
    <name type="ordered locus">MT1366</name>
</gene>
<keyword id="KW-1185">Reference proteome</keyword>
<keyword id="KW-0732">Signal</keyword>
<feature type="signal peptide" evidence="1">
    <location>
        <begin position="1"/>
        <end position="15"/>
    </location>
</feature>
<feature type="chain" id="PRO_0000428418" description="Uncharacterized protein MT1366">
    <location>
        <begin position="16"/>
        <end position="304"/>
    </location>
</feature>
<feature type="domain" description="Thioredoxin" evidence="2">
    <location>
        <begin position="28"/>
        <end position="151"/>
    </location>
</feature>
<sequence length="304" mass="32170">MTRPRPPLGPAMAGAVDLSGIKQRAQQNAAASTDADRALSTPSGVTEITEANFEDEVIVRSDEVPVVVLLWSPRSEVCVDLLDTLSGLAAAAKGKWSLASVNVDVAPRVAQIFGVQAVPTVVALAAGQPISSFQGLQPADQLSRWVDSLLSATAGKLKGAASSEESTEVDPAVAQARQQLEDGDFVAARKSYQAILDANPGSVEAKAAIRQIEFLIRATAQRPDAVSVADSLSDDIDAAFAAADVQVLNQDVSAAFERLIALVRRTSGEERTRVRTRLIELFELFDPADPEVVAGRRNLANALY</sequence>
<reference key="1">
    <citation type="journal article" date="2002" name="J. Bacteriol.">
        <title>Whole-genome comparison of Mycobacterium tuberculosis clinical and laboratory strains.</title>
        <authorList>
            <person name="Fleischmann R.D."/>
            <person name="Alland D."/>
            <person name="Eisen J.A."/>
            <person name="Carpenter L."/>
            <person name="White O."/>
            <person name="Peterson J.D."/>
            <person name="DeBoy R.T."/>
            <person name="Dodson R.J."/>
            <person name="Gwinn M.L."/>
            <person name="Haft D.H."/>
            <person name="Hickey E.K."/>
            <person name="Kolonay J.F."/>
            <person name="Nelson W.C."/>
            <person name="Umayam L.A."/>
            <person name="Ermolaeva M.D."/>
            <person name="Salzberg S.L."/>
            <person name="Delcher A."/>
            <person name="Utterback T.R."/>
            <person name="Weidman J.F."/>
            <person name="Khouri H.M."/>
            <person name="Gill J."/>
            <person name="Mikula A."/>
            <person name="Bishai W."/>
            <person name="Jacobs W.R. Jr."/>
            <person name="Venter J.C."/>
            <person name="Fraser C.M."/>
        </authorList>
    </citation>
    <scope>NUCLEOTIDE SEQUENCE [LARGE SCALE GENOMIC DNA]</scope>
    <source>
        <strain>CDC 1551 / Oshkosh</strain>
    </source>
</reference>
<organism>
    <name type="scientific">Mycobacterium tuberculosis (strain CDC 1551 / Oshkosh)</name>
    <dbReference type="NCBI Taxonomy" id="83331"/>
    <lineage>
        <taxon>Bacteria</taxon>
        <taxon>Bacillati</taxon>
        <taxon>Actinomycetota</taxon>
        <taxon>Actinomycetes</taxon>
        <taxon>Mycobacteriales</taxon>
        <taxon>Mycobacteriaceae</taxon>
        <taxon>Mycobacterium</taxon>
        <taxon>Mycobacterium tuberculosis complex</taxon>
    </lineage>
</organism>
<dbReference type="EMBL" id="AE000516">
    <property type="protein sequence ID" value="AAK45629.1"/>
    <property type="molecule type" value="Genomic_DNA"/>
</dbReference>
<dbReference type="PIR" id="H70769">
    <property type="entry name" value="H70769"/>
</dbReference>
<dbReference type="RefSeq" id="WP_003406887.1">
    <property type="nucleotide sequence ID" value="NZ_KK341227.1"/>
</dbReference>
<dbReference type="SMR" id="P9WG60"/>
<dbReference type="KEGG" id="mtc:MT1366"/>
<dbReference type="PATRIC" id="fig|83331.31.peg.1473"/>
<dbReference type="HOGENOM" id="CLU_046120_0_1_11"/>
<dbReference type="Proteomes" id="UP000001020">
    <property type="component" value="Chromosome"/>
</dbReference>
<dbReference type="GO" id="GO:0016491">
    <property type="term" value="F:oxidoreductase activity"/>
    <property type="evidence" value="ECO:0007669"/>
    <property type="project" value="UniProtKB-ARBA"/>
</dbReference>
<dbReference type="GO" id="GO:0045454">
    <property type="term" value="P:cell redox homeostasis"/>
    <property type="evidence" value="ECO:0007669"/>
    <property type="project" value="TreeGrafter"/>
</dbReference>
<dbReference type="GO" id="GO:0006950">
    <property type="term" value="P:response to stress"/>
    <property type="evidence" value="ECO:0007669"/>
    <property type="project" value="UniProtKB-ARBA"/>
</dbReference>
<dbReference type="CDD" id="cd02956">
    <property type="entry name" value="ybbN"/>
    <property type="match status" value="1"/>
</dbReference>
<dbReference type="Gene3D" id="3.40.30.10">
    <property type="entry name" value="Glutaredoxin"/>
    <property type="match status" value="1"/>
</dbReference>
<dbReference type="Gene3D" id="1.25.40.10">
    <property type="entry name" value="Tetratricopeptide repeat domain"/>
    <property type="match status" value="1"/>
</dbReference>
<dbReference type="InterPro" id="IPR036249">
    <property type="entry name" value="Thioredoxin-like_sf"/>
</dbReference>
<dbReference type="InterPro" id="IPR013766">
    <property type="entry name" value="Thioredoxin_domain"/>
</dbReference>
<dbReference type="InterPro" id="IPR011990">
    <property type="entry name" value="TPR-like_helical_dom_sf"/>
</dbReference>
<dbReference type="PANTHER" id="PTHR43601">
    <property type="entry name" value="THIOREDOXIN, MITOCHONDRIAL"/>
    <property type="match status" value="1"/>
</dbReference>
<dbReference type="PANTHER" id="PTHR43601:SF3">
    <property type="entry name" value="THIOREDOXIN, MITOCHONDRIAL"/>
    <property type="match status" value="1"/>
</dbReference>
<dbReference type="Pfam" id="PF00085">
    <property type="entry name" value="Thioredoxin"/>
    <property type="match status" value="1"/>
</dbReference>
<dbReference type="Pfam" id="PF14561">
    <property type="entry name" value="TPR_20"/>
    <property type="match status" value="1"/>
</dbReference>
<dbReference type="SUPFAM" id="SSF52833">
    <property type="entry name" value="Thioredoxin-like"/>
    <property type="match status" value="1"/>
</dbReference>
<dbReference type="PROSITE" id="PS51352">
    <property type="entry name" value="THIOREDOXIN_2"/>
    <property type="match status" value="1"/>
</dbReference>
<name>Y1324_MYCTO</name>
<proteinExistence type="inferred from homology"/>
<accession>P9WG60</accession>
<accession>L0T6I9</accession>
<accession>P64807</accession>
<accession>Q10636</accession>